<dbReference type="EMBL" id="CR860646">
    <property type="protein sequence ID" value="CAH92766.1"/>
    <property type="molecule type" value="mRNA"/>
</dbReference>
<dbReference type="RefSeq" id="NP_001124564.1">
    <property type="nucleotide sequence ID" value="NM_001131092.1"/>
</dbReference>
<dbReference type="RefSeq" id="XP_024108685.1">
    <property type="nucleotide sequence ID" value="XM_024252917.3"/>
</dbReference>
<dbReference type="RefSeq" id="XP_024108686.1">
    <property type="nucleotide sequence ID" value="XM_024252918.3"/>
</dbReference>
<dbReference type="RefSeq" id="XP_054377315.1">
    <property type="nucleotide sequence ID" value="XM_054521340.2"/>
</dbReference>
<dbReference type="SMR" id="Q5R650"/>
<dbReference type="FunCoup" id="Q5R650">
    <property type="interactions" value="4316"/>
</dbReference>
<dbReference type="STRING" id="9601.ENSPPYP00000002360"/>
<dbReference type="GeneID" id="100169737"/>
<dbReference type="KEGG" id="pon:100169737"/>
<dbReference type="CTD" id="22884"/>
<dbReference type="eggNOG" id="KOG0300">
    <property type="taxonomic scope" value="Eukaryota"/>
</dbReference>
<dbReference type="InParanoid" id="Q5R650"/>
<dbReference type="OrthoDB" id="9984207at2759"/>
<dbReference type="Proteomes" id="UP000001595">
    <property type="component" value="Unplaced"/>
</dbReference>
<dbReference type="GO" id="GO:0005737">
    <property type="term" value="C:cytoplasm"/>
    <property type="evidence" value="ECO:0000250"/>
    <property type="project" value="UniProtKB"/>
</dbReference>
<dbReference type="GO" id="GO:0005634">
    <property type="term" value="C:nucleus"/>
    <property type="evidence" value="ECO:0000250"/>
    <property type="project" value="UniProtKB"/>
</dbReference>
<dbReference type="GO" id="GO:0002260">
    <property type="term" value="P:lymphocyte homeostasis"/>
    <property type="evidence" value="ECO:0000250"/>
    <property type="project" value="UniProtKB"/>
</dbReference>
<dbReference type="CDD" id="cd00200">
    <property type="entry name" value="WD40"/>
    <property type="match status" value="1"/>
</dbReference>
<dbReference type="FunFam" id="2.130.10.10:FF:000511">
    <property type="entry name" value="WD repeat domain 37"/>
    <property type="match status" value="1"/>
</dbReference>
<dbReference type="FunFam" id="2.130.10.10:FF:000080">
    <property type="entry name" value="WD repeat-containing protein 37"/>
    <property type="match status" value="1"/>
</dbReference>
<dbReference type="FunFam" id="2.130.10.10:FF:000152">
    <property type="entry name" value="WD repeat-containing protein 37"/>
    <property type="match status" value="1"/>
</dbReference>
<dbReference type="Gene3D" id="2.130.10.10">
    <property type="entry name" value="YVTN repeat-like/Quinoprotein amine dehydrogenase"/>
    <property type="match status" value="3"/>
</dbReference>
<dbReference type="InterPro" id="IPR020472">
    <property type="entry name" value="G-protein_beta_WD-40_rep"/>
</dbReference>
<dbReference type="InterPro" id="IPR015943">
    <property type="entry name" value="WD40/YVTN_repeat-like_dom_sf"/>
</dbReference>
<dbReference type="InterPro" id="IPR019775">
    <property type="entry name" value="WD40_repeat_CS"/>
</dbReference>
<dbReference type="InterPro" id="IPR036322">
    <property type="entry name" value="WD40_repeat_dom_sf"/>
</dbReference>
<dbReference type="InterPro" id="IPR001680">
    <property type="entry name" value="WD40_rpt"/>
</dbReference>
<dbReference type="PANTHER" id="PTHR19855:SF12">
    <property type="entry name" value="WD REPEAT-CONTAINING PROTEIN 37"/>
    <property type="match status" value="1"/>
</dbReference>
<dbReference type="PANTHER" id="PTHR19855">
    <property type="entry name" value="WD40 REPEAT PROTEIN 12, 37"/>
    <property type="match status" value="1"/>
</dbReference>
<dbReference type="Pfam" id="PF00400">
    <property type="entry name" value="WD40"/>
    <property type="match status" value="6"/>
</dbReference>
<dbReference type="PRINTS" id="PR00320">
    <property type="entry name" value="GPROTEINBRPT"/>
</dbReference>
<dbReference type="SMART" id="SM00320">
    <property type="entry name" value="WD40"/>
    <property type="match status" value="6"/>
</dbReference>
<dbReference type="SUPFAM" id="SSF50978">
    <property type="entry name" value="WD40 repeat-like"/>
    <property type="match status" value="1"/>
</dbReference>
<dbReference type="PROSITE" id="PS00678">
    <property type="entry name" value="WD_REPEATS_1"/>
    <property type="match status" value="2"/>
</dbReference>
<dbReference type="PROSITE" id="PS50082">
    <property type="entry name" value="WD_REPEATS_2"/>
    <property type="match status" value="5"/>
</dbReference>
<dbReference type="PROSITE" id="PS50294">
    <property type="entry name" value="WD_REPEATS_REGION"/>
    <property type="match status" value="1"/>
</dbReference>
<evidence type="ECO:0000250" key="1">
    <source>
        <dbReference type="UniProtKB" id="Q8CBE3"/>
    </source>
</evidence>
<evidence type="ECO:0000250" key="2">
    <source>
        <dbReference type="UniProtKB" id="Q9Y2I8"/>
    </source>
</evidence>
<evidence type="ECO:0000256" key="3">
    <source>
        <dbReference type="SAM" id="MobiDB-lite"/>
    </source>
</evidence>
<keyword id="KW-0963">Cytoplasm</keyword>
<keyword id="KW-0539">Nucleus</keyword>
<keyword id="KW-1185">Reference proteome</keyword>
<keyword id="KW-0677">Repeat</keyword>
<keyword id="KW-0853">WD repeat</keyword>
<protein>
    <recommendedName>
        <fullName>WD repeat-containing protein 37</fullName>
    </recommendedName>
</protein>
<gene>
    <name type="primary">WDR37</name>
</gene>
<sequence>MPTESASCSTARQTKQKRKSHSLSIRRTNSSEQERTGLPRDMLEGQDSKLPSSVRSTLLELFGQIEREFENLYIENLELRREIDTLNERLAAEGQAIDGAELSKGQLKTKASHSTSQLSQKLKTTYKASTSKIVSSFKTTTSRAACQLVKEYIGHRDGIWDVSVAKTQPVVLGTASADHTALLWSIETGKCLVKYAGHVGSVNSIKFHPSEQLALTASGDQTAHIWRYAVQLPTPQPVADTSQISGEDEVECSDKDEPDLDGDVSSDCPTIRVPLTSLKSHQGVVIAADWLVGGKQAVTASWDRTANLYDVETSELVHSLTGHDQELTHCCTHPTQRLVVTSSRDTTFRLWDFRDPSIHSVNVFQGHTDTVTSAVFTVGDNVVSGSDDRTVKVWDLKNMRSPIATIRTDSAINRINVCVGQKIIALPHDNRQVRLFDMSGVRLARLPRSSRQGHRRMVCCSAWSEDHPVCNLFTCGFDRQAIGWNINIPALLQEK</sequence>
<comment type="function">
    <text evidence="1">Required for normal ER Ca2+ handling in lymphocytes. Together with PACS1, it plays an essential role in stabilizing peripheral lymphocyte populations.</text>
</comment>
<comment type="subunit">
    <text evidence="1 2">Forms homodimers (By similarity). Interacts with PACS1 (By similarity). Interacts with PACS2 (By similarity).</text>
</comment>
<comment type="subcellular location">
    <subcellularLocation>
        <location evidence="2">Cytoplasm</location>
    </subcellularLocation>
    <subcellularLocation>
        <location evidence="2">Nucleus</location>
    </subcellularLocation>
    <text evidence="2">Primarily localized in the cytoplasm with the highest concentration in the perinuclear region and in small clusters at the leading edge of the spreading cells.</text>
</comment>
<accession>Q5R650</accession>
<name>WDR37_PONAB</name>
<organism>
    <name type="scientific">Pongo abelii</name>
    <name type="common">Sumatran orangutan</name>
    <name type="synonym">Pongo pygmaeus abelii</name>
    <dbReference type="NCBI Taxonomy" id="9601"/>
    <lineage>
        <taxon>Eukaryota</taxon>
        <taxon>Metazoa</taxon>
        <taxon>Chordata</taxon>
        <taxon>Craniata</taxon>
        <taxon>Vertebrata</taxon>
        <taxon>Euteleostomi</taxon>
        <taxon>Mammalia</taxon>
        <taxon>Eutheria</taxon>
        <taxon>Euarchontoglires</taxon>
        <taxon>Primates</taxon>
        <taxon>Haplorrhini</taxon>
        <taxon>Catarrhini</taxon>
        <taxon>Hominidae</taxon>
        <taxon>Pongo</taxon>
    </lineage>
</organism>
<proteinExistence type="evidence at transcript level"/>
<feature type="chain" id="PRO_0000345130" description="WD repeat-containing protein 37">
    <location>
        <begin position="1"/>
        <end position="495"/>
    </location>
</feature>
<feature type="repeat" description="WD 1">
    <location>
        <begin position="154"/>
        <end position="194"/>
    </location>
</feature>
<feature type="repeat" description="WD 2">
    <location>
        <begin position="197"/>
        <end position="236"/>
    </location>
</feature>
<feature type="repeat" description="WD 3">
    <location>
        <begin position="280"/>
        <end position="319"/>
    </location>
</feature>
<feature type="repeat" description="WD 4">
    <location>
        <begin position="322"/>
        <end position="361"/>
    </location>
</feature>
<feature type="repeat" description="WD 5">
    <location>
        <begin position="366"/>
        <end position="404"/>
    </location>
</feature>
<feature type="repeat" description="WD 6">
    <location>
        <begin position="407"/>
        <end position="446"/>
    </location>
</feature>
<feature type="repeat" description="WD 7">
    <location>
        <begin position="453"/>
        <end position="494"/>
    </location>
</feature>
<feature type="region of interest" description="Disordered" evidence="3">
    <location>
        <begin position="1"/>
        <end position="50"/>
    </location>
</feature>
<feature type="region of interest" description="Disordered" evidence="3">
    <location>
        <begin position="237"/>
        <end position="266"/>
    </location>
</feature>
<feature type="compositionally biased region" description="Polar residues" evidence="3">
    <location>
        <begin position="1"/>
        <end position="13"/>
    </location>
</feature>
<feature type="compositionally biased region" description="Polar residues" evidence="3">
    <location>
        <begin position="22"/>
        <end position="31"/>
    </location>
</feature>
<feature type="compositionally biased region" description="Basic and acidic residues" evidence="3">
    <location>
        <begin position="32"/>
        <end position="47"/>
    </location>
</feature>
<feature type="compositionally biased region" description="Acidic residues" evidence="3">
    <location>
        <begin position="246"/>
        <end position="264"/>
    </location>
</feature>
<reference key="1">
    <citation type="submission" date="2004-11" db="EMBL/GenBank/DDBJ databases">
        <authorList>
            <consortium name="The German cDNA consortium"/>
        </authorList>
    </citation>
    <scope>NUCLEOTIDE SEQUENCE [LARGE SCALE MRNA]</scope>
    <source>
        <tissue>Brain cortex</tissue>
    </source>
</reference>